<reference key="1">
    <citation type="journal article" date="2004" name="Science">
        <title>The Ashbya gossypii genome as a tool for mapping the ancient Saccharomyces cerevisiae genome.</title>
        <authorList>
            <person name="Dietrich F.S."/>
            <person name="Voegeli S."/>
            <person name="Brachat S."/>
            <person name="Lerch A."/>
            <person name="Gates K."/>
            <person name="Steiner S."/>
            <person name="Mohr C."/>
            <person name="Poehlmann R."/>
            <person name="Luedi P."/>
            <person name="Choi S."/>
            <person name="Wing R.A."/>
            <person name="Flavier A."/>
            <person name="Gaffney T.D."/>
            <person name="Philippsen P."/>
        </authorList>
    </citation>
    <scope>NUCLEOTIDE SEQUENCE [LARGE SCALE GENOMIC DNA]</scope>
    <source>
        <strain>ATCC 10895 / CBS 109.51 / FGSC 9923 / NRRL Y-1056</strain>
    </source>
</reference>
<reference key="2">
    <citation type="journal article" date="2013" name="G3 (Bethesda)">
        <title>Genomes of Ashbya fungi isolated from insects reveal four mating-type loci, numerous translocations, lack of transposons, and distinct gene duplications.</title>
        <authorList>
            <person name="Dietrich F.S."/>
            <person name="Voegeli S."/>
            <person name="Kuo S."/>
            <person name="Philippsen P."/>
        </authorList>
    </citation>
    <scope>GENOME REANNOTATION</scope>
    <source>
        <strain>ATCC 10895 / CBS 109.51 / FGSC 9923 / NRRL Y-1056</strain>
    </source>
</reference>
<keyword id="KW-0961">Cell wall biogenesis/degradation</keyword>
<keyword id="KW-0256">Endoplasmic reticulum</keyword>
<keyword id="KW-0328">Glycosyltransferase</keyword>
<keyword id="KW-0337">GPI-anchor biosynthesis</keyword>
<keyword id="KW-0472">Membrane</keyword>
<keyword id="KW-1185">Reference proteome</keyword>
<keyword id="KW-0808">Transferase</keyword>
<keyword id="KW-0812">Transmembrane</keyword>
<keyword id="KW-1133">Transmembrane helix</keyword>
<feature type="chain" id="PRO_0000246223" description="GPI mannosyltransferase 1">
    <location>
        <begin position="1"/>
        <end position="397"/>
    </location>
</feature>
<feature type="transmembrane region" description="Helical" evidence="2">
    <location>
        <begin position="5"/>
        <end position="25"/>
    </location>
</feature>
<feature type="transmembrane region" description="Helical" evidence="2">
    <location>
        <begin position="79"/>
        <end position="99"/>
    </location>
</feature>
<feature type="transmembrane region" description="Helical" evidence="2">
    <location>
        <begin position="111"/>
        <end position="128"/>
    </location>
</feature>
<feature type="transmembrane region" description="Helical" evidence="2">
    <location>
        <begin position="156"/>
        <end position="176"/>
    </location>
</feature>
<feature type="transmembrane region" description="Helical" evidence="2">
    <location>
        <begin position="193"/>
        <end position="213"/>
    </location>
</feature>
<feature type="transmembrane region" description="Helical" evidence="2">
    <location>
        <begin position="257"/>
        <end position="277"/>
    </location>
</feature>
<feature type="transmembrane region" description="Helical" evidence="2">
    <location>
        <begin position="307"/>
        <end position="327"/>
    </location>
</feature>
<feature type="transmembrane region" description="Helical" evidence="2">
    <location>
        <begin position="330"/>
        <end position="350"/>
    </location>
</feature>
<feature type="transmembrane region" description="Helical" evidence="2">
    <location>
        <begin position="362"/>
        <end position="382"/>
    </location>
</feature>
<gene>
    <name type="primary">GPI14</name>
    <name type="ordered locus">ACR034W</name>
</gene>
<evidence type="ECO:0000250" key="1"/>
<evidence type="ECO:0000255" key="2"/>
<evidence type="ECO:0000305" key="3"/>
<sequence length="397" mass="46504">MKREECLLVLAGLLARVGFFSYGIYQDAHFAVKYTDIDYHVFHDAARYVAQGNSPYLRDTYRYTPLLSWMLVPNHWLQWVHFGKFIFVLFDLLAGVMVMNLLGKCGRRRKLILASLWLLNPVVITVSTRGNAESVMAFLIMWFLVHLRNRQFALSGFVYGVAIHFKIYPIIYALPISIYIRSSEGSRWFLRLLTMGIATLATLVGCGIGMYYIYGWEFLEHAYIYHFTRTDHRHNFSLWNMLLYLDSSGVVPTTINWAEFAFLPQLFICAAVTYVLWEAPTFQNMQCVLFLQTFAFVTYNKVCTSQYFIWYLLFLPSFLLDTTLSGAKGIFLIFLWVGTQAWWLYNGYLLEFEGKNMFYPRLFSACVTFFLANVYLLAQFILDCRRRNYQTNIKKTN</sequence>
<name>GPI14_EREGS</name>
<protein>
    <recommendedName>
        <fullName>GPI mannosyltransferase 1</fullName>
        <ecNumber>2.4.1.-</ecNumber>
    </recommendedName>
    <alternativeName>
        <fullName>GPI mannosyltransferase I</fullName>
        <shortName>GPI-MT-I</shortName>
    </alternativeName>
    <alternativeName>
        <fullName>Glycosylphosphatidylinositol-anchor biosynthesis protein 14</fullName>
    </alternativeName>
</protein>
<proteinExistence type="inferred from homology"/>
<comment type="function">
    <text evidence="1">Mannosyltransferase involved in glycosylphosphatidylinositol-anchor biosynthesis. Transfers the first alpha-1,4-mannose to GlcN-acyl-PI during GPI precursor assembly. Required for cell wall integrity (By similarity).</text>
</comment>
<comment type="pathway">
    <text>Glycolipid biosynthesis; glycosylphosphatidylinositol-anchor biosynthesis.</text>
</comment>
<comment type="subcellular location">
    <subcellularLocation>
        <location evidence="1">Endoplasmic reticulum membrane</location>
        <topology evidence="1">Multi-pass membrane protein</topology>
    </subcellularLocation>
</comment>
<comment type="similarity">
    <text evidence="3">Belongs to the PIGM family.</text>
</comment>
<organism>
    <name type="scientific">Eremothecium gossypii (strain ATCC 10895 / CBS 109.51 / FGSC 9923 / NRRL Y-1056)</name>
    <name type="common">Yeast</name>
    <name type="synonym">Ashbya gossypii</name>
    <dbReference type="NCBI Taxonomy" id="284811"/>
    <lineage>
        <taxon>Eukaryota</taxon>
        <taxon>Fungi</taxon>
        <taxon>Dikarya</taxon>
        <taxon>Ascomycota</taxon>
        <taxon>Saccharomycotina</taxon>
        <taxon>Saccharomycetes</taxon>
        <taxon>Saccharomycetales</taxon>
        <taxon>Saccharomycetaceae</taxon>
        <taxon>Eremothecium</taxon>
    </lineage>
</organism>
<accession>Q75C82</accession>
<dbReference type="EC" id="2.4.1.-"/>
<dbReference type="EMBL" id="AE016816">
    <property type="protein sequence ID" value="AAS51261.1"/>
    <property type="molecule type" value="Genomic_DNA"/>
</dbReference>
<dbReference type="RefSeq" id="NP_983437.1">
    <property type="nucleotide sequence ID" value="NM_208790.1"/>
</dbReference>
<dbReference type="SMR" id="Q75C82"/>
<dbReference type="FunCoup" id="Q75C82">
    <property type="interactions" value="600"/>
</dbReference>
<dbReference type="STRING" id="284811.Q75C82"/>
<dbReference type="CAZy" id="GT50">
    <property type="family name" value="Glycosyltransferase Family 50"/>
</dbReference>
<dbReference type="EnsemblFungi" id="AAS51261">
    <property type="protein sequence ID" value="AAS51261"/>
    <property type="gene ID" value="AGOS_ACR034W"/>
</dbReference>
<dbReference type="GeneID" id="4619562"/>
<dbReference type="KEGG" id="ago:AGOS_ACR034W"/>
<dbReference type="eggNOG" id="KOG3893">
    <property type="taxonomic scope" value="Eukaryota"/>
</dbReference>
<dbReference type="HOGENOM" id="CLU_024220_3_1_1"/>
<dbReference type="InParanoid" id="Q75C82"/>
<dbReference type="OMA" id="LINCWIL"/>
<dbReference type="OrthoDB" id="1741594at2759"/>
<dbReference type="UniPathway" id="UPA00196"/>
<dbReference type="Proteomes" id="UP000000591">
    <property type="component" value="Chromosome III"/>
</dbReference>
<dbReference type="GO" id="GO:0005789">
    <property type="term" value="C:endoplasmic reticulum membrane"/>
    <property type="evidence" value="ECO:0007669"/>
    <property type="project" value="UniProtKB-SubCell"/>
</dbReference>
<dbReference type="GO" id="GO:1990529">
    <property type="term" value="C:glycosylphosphatidylinositol-mannosyltransferase I complex"/>
    <property type="evidence" value="ECO:0000318"/>
    <property type="project" value="GO_Central"/>
</dbReference>
<dbReference type="GO" id="GO:0051751">
    <property type="term" value="F:alpha-1,4-mannosyltransferase activity"/>
    <property type="evidence" value="ECO:0007669"/>
    <property type="project" value="InterPro"/>
</dbReference>
<dbReference type="GO" id="GO:0004376">
    <property type="term" value="F:glycolipid mannosyltransferase activity"/>
    <property type="evidence" value="ECO:0007669"/>
    <property type="project" value="InterPro"/>
</dbReference>
<dbReference type="GO" id="GO:0000030">
    <property type="term" value="F:mannosyltransferase activity"/>
    <property type="evidence" value="ECO:0000318"/>
    <property type="project" value="GO_Central"/>
</dbReference>
<dbReference type="GO" id="GO:0031505">
    <property type="term" value="P:fungal-type cell wall organization"/>
    <property type="evidence" value="ECO:0007669"/>
    <property type="project" value="EnsemblFungi"/>
</dbReference>
<dbReference type="GO" id="GO:0006506">
    <property type="term" value="P:GPI anchor biosynthetic process"/>
    <property type="evidence" value="ECO:0000318"/>
    <property type="project" value="GO_Central"/>
</dbReference>
<dbReference type="InterPro" id="IPR007704">
    <property type="entry name" value="PIG-M"/>
</dbReference>
<dbReference type="PANTHER" id="PTHR12886:SF0">
    <property type="entry name" value="GPI MANNOSYLTRANSFERASE 1"/>
    <property type="match status" value="1"/>
</dbReference>
<dbReference type="PANTHER" id="PTHR12886">
    <property type="entry name" value="PIG-M MANNOSYLTRANSFERASE"/>
    <property type="match status" value="1"/>
</dbReference>
<dbReference type="Pfam" id="PF05007">
    <property type="entry name" value="Mannosyl_trans"/>
    <property type="match status" value="1"/>
</dbReference>